<sequence>MKLPRLLQASNSKGVLAEKQALSYLQEQGLRLICQNYYCRFGEIDLIMIDQDTLVFIEVRYRKNSDFGGPFASINKSKQRKIITTAKHYLRTLEDEPFCRFDAIAIDSKSTTPAWIQNAFQE</sequence>
<reference key="1">
    <citation type="journal article" date="2008" name="BMC Genomics">
        <title>Genomics of an extreme psychrophile, Psychromonas ingrahamii.</title>
        <authorList>
            <person name="Riley M."/>
            <person name="Staley J.T."/>
            <person name="Danchin A."/>
            <person name="Wang T.Z."/>
            <person name="Brettin T.S."/>
            <person name="Hauser L.J."/>
            <person name="Land M.L."/>
            <person name="Thompson L.S."/>
        </authorList>
    </citation>
    <scope>NUCLEOTIDE SEQUENCE [LARGE SCALE GENOMIC DNA]</scope>
    <source>
        <strain>DSM 17664 / CCUG 51855 / 37</strain>
    </source>
</reference>
<organism>
    <name type="scientific">Psychromonas ingrahamii (strain DSM 17664 / CCUG 51855 / 37)</name>
    <dbReference type="NCBI Taxonomy" id="357804"/>
    <lineage>
        <taxon>Bacteria</taxon>
        <taxon>Pseudomonadati</taxon>
        <taxon>Pseudomonadota</taxon>
        <taxon>Gammaproteobacteria</taxon>
        <taxon>Alteromonadales</taxon>
        <taxon>Psychromonadaceae</taxon>
        <taxon>Psychromonas</taxon>
    </lineage>
</organism>
<accession>A1SU47</accession>
<gene>
    <name type="ordered locus">Ping_1176</name>
</gene>
<evidence type="ECO:0000255" key="1">
    <source>
        <dbReference type="HAMAP-Rule" id="MF_00048"/>
    </source>
</evidence>
<proteinExistence type="inferred from homology"/>
<name>Y1176_PSYIN</name>
<dbReference type="EMBL" id="CP000510">
    <property type="protein sequence ID" value="ABM03012.1"/>
    <property type="molecule type" value="Genomic_DNA"/>
</dbReference>
<dbReference type="RefSeq" id="WP_011769575.1">
    <property type="nucleotide sequence ID" value="NC_008709.1"/>
</dbReference>
<dbReference type="SMR" id="A1SU47"/>
<dbReference type="STRING" id="357804.Ping_1176"/>
<dbReference type="KEGG" id="pin:Ping_1176"/>
<dbReference type="eggNOG" id="COG0792">
    <property type="taxonomic scope" value="Bacteria"/>
</dbReference>
<dbReference type="HOGENOM" id="CLU_115353_1_0_6"/>
<dbReference type="OrthoDB" id="9794876at2"/>
<dbReference type="Proteomes" id="UP000000639">
    <property type="component" value="Chromosome"/>
</dbReference>
<dbReference type="GO" id="GO:0003676">
    <property type="term" value="F:nucleic acid binding"/>
    <property type="evidence" value="ECO:0007669"/>
    <property type="project" value="InterPro"/>
</dbReference>
<dbReference type="CDD" id="cd20736">
    <property type="entry name" value="PoNe_Nuclease"/>
    <property type="match status" value="1"/>
</dbReference>
<dbReference type="Gene3D" id="3.40.1350.10">
    <property type="match status" value="1"/>
</dbReference>
<dbReference type="HAMAP" id="MF_00048">
    <property type="entry name" value="UPF0102"/>
    <property type="match status" value="1"/>
</dbReference>
<dbReference type="InterPro" id="IPR011335">
    <property type="entry name" value="Restrct_endonuc-II-like"/>
</dbReference>
<dbReference type="InterPro" id="IPR011856">
    <property type="entry name" value="tRNA_endonuc-like_dom_sf"/>
</dbReference>
<dbReference type="InterPro" id="IPR003509">
    <property type="entry name" value="UPF0102_YraN-like"/>
</dbReference>
<dbReference type="NCBIfam" id="NF009150">
    <property type="entry name" value="PRK12497.1-3"/>
    <property type="match status" value="1"/>
</dbReference>
<dbReference type="NCBIfam" id="TIGR00252">
    <property type="entry name" value="YraN family protein"/>
    <property type="match status" value="1"/>
</dbReference>
<dbReference type="PANTHER" id="PTHR34039">
    <property type="entry name" value="UPF0102 PROTEIN YRAN"/>
    <property type="match status" value="1"/>
</dbReference>
<dbReference type="PANTHER" id="PTHR34039:SF1">
    <property type="entry name" value="UPF0102 PROTEIN YRAN"/>
    <property type="match status" value="1"/>
</dbReference>
<dbReference type="Pfam" id="PF02021">
    <property type="entry name" value="UPF0102"/>
    <property type="match status" value="1"/>
</dbReference>
<dbReference type="SUPFAM" id="SSF52980">
    <property type="entry name" value="Restriction endonuclease-like"/>
    <property type="match status" value="1"/>
</dbReference>
<keyword id="KW-1185">Reference proteome</keyword>
<feature type="chain" id="PRO_0000336241" description="UPF0102 protein Ping_1176">
    <location>
        <begin position="1"/>
        <end position="122"/>
    </location>
</feature>
<comment type="similarity">
    <text evidence="1">Belongs to the UPF0102 family.</text>
</comment>
<protein>
    <recommendedName>
        <fullName evidence="1">UPF0102 protein Ping_1176</fullName>
    </recommendedName>
</protein>